<keyword id="KW-0028">Amino-acid biosynthesis</keyword>
<keyword id="KW-0963">Cytoplasm</keyword>
<keyword id="KW-0554">One-carbon metabolism</keyword>
<keyword id="KW-0663">Pyridoxal phosphate</keyword>
<keyword id="KW-1185">Reference proteome</keyword>
<keyword id="KW-0808">Transferase</keyword>
<proteinExistence type="inferred from homology"/>
<protein>
    <recommendedName>
        <fullName evidence="1">Serine hydroxymethyltransferase</fullName>
        <shortName evidence="1">SHMT</shortName>
        <shortName evidence="1">Serine methylase</shortName>
        <ecNumber evidence="1">2.1.2.1</ecNumber>
    </recommendedName>
</protein>
<gene>
    <name evidence="1" type="primary">glyA</name>
    <name type="ordered locus">Deide_20930</name>
</gene>
<dbReference type="EC" id="2.1.2.1" evidence="1"/>
<dbReference type="EMBL" id="CP001114">
    <property type="protein sequence ID" value="ACO47118.1"/>
    <property type="molecule type" value="Genomic_DNA"/>
</dbReference>
<dbReference type="RefSeq" id="WP_012694239.1">
    <property type="nucleotide sequence ID" value="NC_012526.1"/>
</dbReference>
<dbReference type="SMR" id="C1CYT8"/>
<dbReference type="STRING" id="546414.Deide_20930"/>
<dbReference type="PaxDb" id="546414-Deide_20930"/>
<dbReference type="KEGG" id="ddr:Deide_20930"/>
<dbReference type="eggNOG" id="COG0112">
    <property type="taxonomic scope" value="Bacteria"/>
</dbReference>
<dbReference type="HOGENOM" id="CLU_022477_2_1_0"/>
<dbReference type="OrthoDB" id="9803846at2"/>
<dbReference type="UniPathway" id="UPA00193"/>
<dbReference type="UniPathway" id="UPA00288">
    <property type="reaction ID" value="UER01023"/>
</dbReference>
<dbReference type="Proteomes" id="UP000002208">
    <property type="component" value="Chromosome"/>
</dbReference>
<dbReference type="GO" id="GO:0005829">
    <property type="term" value="C:cytosol"/>
    <property type="evidence" value="ECO:0007669"/>
    <property type="project" value="TreeGrafter"/>
</dbReference>
<dbReference type="GO" id="GO:0004372">
    <property type="term" value="F:glycine hydroxymethyltransferase activity"/>
    <property type="evidence" value="ECO:0007669"/>
    <property type="project" value="UniProtKB-UniRule"/>
</dbReference>
<dbReference type="GO" id="GO:0030170">
    <property type="term" value="F:pyridoxal phosphate binding"/>
    <property type="evidence" value="ECO:0007669"/>
    <property type="project" value="UniProtKB-UniRule"/>
</dbReference>
<dbReference type="GO" id="GO:0019264">
    <property type="term" value="P:glycine biosynthetic process from serine"/>
    <property type="evidence" value="ECO:0007669"/>
    <property type="project" value="UniProtKB-UniRule"/>
</dbReference>
<dbReference type="GO" id="GO:0035999">
    <property type="term" value="P:tetrahydrofolate interconversion"/>
    <property type="evidence" value="ECO:0007669"/>
    <property type="project" value="UniProtKB-UniRule"/>
</dbReference>
<dbReference type="CDD" id="cd00378">
    <property type="entry name" value="SHMT"/>
    <property type="match status" value="1"/>
</dbReference>
<dbReference type="FunFam" id="3.40.640.10:FF:000001">
    <property type="entry name" value="Serine hydroxymethyltransferase"/>
    <property type="match status" value="1"/>
</dbReference>
<dbReference type="Gene3D" id="3.90.1150.10">
    <property type="entry name" value="Aspartate Aminotransferase, domain 1"/>
    <property type="match status" value="1"/>
</dbReference>
<dbReference type="Gene3D" id="3.40.640.10">
    <property type="entry name" value="Type I PLP-dependent aspartate aminotransferase-like (Major domain)"/>
    <property type="match status" value="1"/>
</dbReference>
<dbReference type="HAMAP" id="MF_00051">
    <property type="entry name" value="SHMT"/>
    <property type="match status" value="1"/>
</dbReference>
<dbReference type="InterPro" id="IPR015424">
    <property type="entry name" value="PyrdxlP-dep_Trfase"/>
</dbReference>
<dbReference type="InterPro" id="IPR015421">
    <property type="entry name" value="PyrdxlP-dep_Trfase_major"/>
</dbReference>
<dbReference type="InterPro" id="IPR015422">
    <property type="entry name" value="PyrdxlP-dep_Trfase_small"/>
</dbReference>
<dbReference type="InterPro" id="IPR001085">
    <property type="entry name" value="Ser_HO-MeTrfase"/>
</dbReference>
<dbReference type="InterPro" id="IPR049943">
    <property type="entry name" value="Ser_HO-MeTrfase-like"/>
</dbReference>
<dbReference type="InterPro" id="IPR019798">
    <property type="entry name" value="Ser_HO-MeTrfase_PLP_BS"/>
</dbReference>
<dbReference type="InterPro" id="IPR039429">
    <property type="entry name" value="SHMT-like_dom"/>
</dbReference>
<dbReference type="NCBIfam" id="NF000586">
    <property type="entry name" value="PRK00011.1"/>
    <property type="match status" value="1"/>
</dbReference>
<dbReference type="PANTHER" id="PTHR11680">
    <property type="entry name" value="SERINE HYDROXYMETHYLTRANSFERASE"/>
    <property type="match status" value="1"/>
</dbReference>
<dbReference type="PANTHER" id="PTHR11680:SF35">
    <property type="entry name" value="SERINE HYDROXYMETHYLTRANSFERASE 1"/>
    <property type="match status" value="1"/>
</dbReference>
<dbReference type="Pfam" id="PF00464">
    <property type="entry name" value="SHMT"/>
    <property type="match status" value="1"/>
</dbReference>
<dbReference type="PIRSF" id="PIRSF000412">
    <property type="entry name" value="SHMT"/>
    <property type="match status" value="1"/>
</dbReference>
<dbReference type="SUPFAM" id="SSF53383">
    <property type="entry name" value="PLP-dependent transferases"/>
    <property type="match status" value="1"/>
</dbReference>
<dbReference type="PROSITE" id="PS00096">
    <property type="entry name" value="SHMT"/>
    <property type="match status" value="1"/>
</dbReference>
<evidence type="ECO:0000255" key="1">
    <source>
        <dbReference type="HAMAP-Rule" id="MF_00051"/>
    </source>
</evidence>
<reference key="1">
    <citation type="journal article" date="2009" name="PLoS Genet.">
        <title>Alliance of proteomics and genomics to unravel the specificities of Sahara bacterium Deinococcus deserti.</title>
        <authorList>
            <person name="de Groot A."/>
            <person name="Dulermo R."/>
            <person name="Ortet P."/>
            <person name="Blanchard L."/>
            <person name="Guerin P."/>
            <person name="Fernandez B."/>
            <person name="Vacherie B."/>
            <person name="Dossat C."/>
            <person name="Jolivet E."/>
            <person name="Siguier P."/>
            <person name="Chandler M."/>
            <person name="Barakat M."/>
            <person name="Dedieu A."/>
            <person name="Barbe V."/>
            <person name="Heulin T."/>
            <person name="Sommer S."/>
            <person name="Achouak W."/>
            <person name="Armengaud J."/>
        </authorList>
    </citation>
    <scope>NUCLEOTIDE SEQUENCE [LARGE SCALE GENOMIC DNA]</scope>
    <source>
        <strain>DSM 17065 / CIP 109153 / LMG 22923 / VCD115</strain>
    </source>
</reference>
<feature type="chain" id="PRO_1000202259" description="Serine hydroxymethyltransferase">
    <location>
        <begin position="1"/>
        <end position="407"/>
    </location>
</feature>
<feature type="binding site" evidence="1">
    <location>
        <position position="120"/>
    </location>
    <ligand>
        <name>(6S)-5,6,7,8-tetrahydrofolate</name>
        <dbReference type="ChEBI" id="CHEBI:57453"/>
    </ligand>
</feature>
<feature type="binding site" evidence="1">
    <location>
        <begin position="124"/>
        <end position="126"/>
    </location>
    <ligand>
        <name>(6S)-5,6,7,8-tetrahydrofolate</name>
        <dbReference type="ChEBI" id="CHEBI:57453"/>
    </ligand>
</feature>
<feature type="site" description="Plays an important role in substrate specificity" evidence="1">
    <location>
        <position position="228"/>
    </location>
</feature>
<feature type="modified residue" description="N6-(pyridoxal phosphate)lysine" evidence="1">
    <location>
        <position position="229"/>
    </location>
</feature>
<organism>
    <name type="scientific">Deinococcus deserti (strain DSM 17065 / CIP 109153 / LMG 22923 / VCD115)</name>
    <dbReference type="NCBI Taxonomy" id="546414"/>
    <lineage>
        <taxon>Bacteria</taxon>
        <taxon>Thermotogati</taxon>
        <taxon>Deinococcota</taxon>
        <taxon>Deinococci</taxon>
        <taxon>Deinococcales</taxon>
        <taxon>Deinococcaceae</taxon>
        <taxon>Deinococcus</taxon>
    </lineage>
</organism>
<accession>C1CYT8</accession>
<sequence length="407" mass="44022">MTTAESPATRDTAIFDLIRQEAERQRSGLELIASENFTSAAVREAQGSVLTNKYAEGYPGKRWYGGCEIVDQVEQLAIDRVKELFGAAWANVQPHSGSSANLAVYNALIEPGDTVLGMDLSHGGHLTHGNPVNFSGLRYKIVGYQVNPETELIDMNVVRRLAHEHRPKMIIAGASAYSRSIDFAAFREIADEVGAILFADIAHIAGLIAAGEHPNALPHAHVVASTTHKTLRGPRGGIILSNDLELGAKIDRAVFPGYQGGPLEHVIAAKAVAFGEALRPEFKDYARQVIRNAQALAIAFQQRGYRVVSGGTDNHLLVLDLRAQGLNGTKATKRLDANHITISKSTLPYDTEKILHGGGIRLGTPAVTTRGMTEEHMQVIADLIDRALKGEDVQAEVHDFAGRFPLP</sequence>
<comment type="function">
    <text evidence="1">Catalyzes the reversible interconversion of serine and glycine with tetrahydrofolate (THF) serving as the one-carbon carrier. This reaction serves as the major source of one-carbon groups required for the biosynthesis of purines, thymidylate, methionine, and other important biomolecules. Also exhibits THF-independent aldolase activity toward beta-hydroxyamino acids, producing glycine and aldehydes, via a retro-aldol mechanism.</text>
</comment>
<comment type="catalytic activity">
    <reaction evidence="1">
        <text>(6R)-5,10-methylene-5,6,7,8-tetrahydrofolate + glycine + H2O = (6S)-5,6,7,8-tetrahydrofolate + L-serine</text>
        <dbReference type="Rhea" id="RHEA:15481"/>
        <dbReference type="ChEBI" id="CHEBI:15377"/>
        <dbReference type="ChEBI" id="CHEBI:15636"/>
        <dbReference type="ChEBI" id="CHEBI:33384"/>
        <dbReference type="ChEBI" id="CHEBI:57305"/>
        <dbReference type="ChEBI" id="CHEBI:57453"/>
        <dbReference type="EC" id="2.1.2.1"/>
    </reaction>
</comment>
<comment type="cofactor">
    <cofactor evidence="1">
        <name>pyridoxal 5'-phosphate</name>
        <dbReference type="ChEBI" id="CHEBI:597326"/>
    </cofactor>
</comment>
<comment type="pathway">
    <text evidence="1">One-carbon metabolism; tetrahydrofolate interconversion.</text>
</comment>
<comment type="pathway">
    <text evidence="1">Amino-acid biosynthesis; glycine biosynthesis; glycine from L-serine: step 1/1.</text>
</comment>
<comment type="subunit">
    <text evidence="1">Homodimer.</text>
</comment>
<comment type="subcellular location">
    <subcellularLocation>
        <location evidence="1">Cytoplasm</location>
    </subcellularLocation>
</comment>
<comment type="similarity">
    <text evidence="1">Belongs to the SHMT family.</text>
</comment>
<name>GLYA_DEIDV</name>